<evidence type="ECO:0000255" key="1">
    <source>
        <dbReference type="HAMAP-Rule" id="MF_00093"/>
    </source>
</evidence>
<organism>
    <name type="scientific">Aliarcobacter butzleri (strain RM4018)</name>
    <name type="common">Arcobacter butzleri</name>
    <dbReference type="NCBI Taxonomy" id="367737"/>
    <lineage>
        <taxon>Bacteria</taxon>
        <taxon>Pseudomonadati</taxon>
        <taxon>Campylobacterota</taxon>
        <taxon>Epsilonproteobacteria</taxon>
        <taxon>Campylobacterales</taxon>
        <taxon>Arcobacteraceae</taxon>
        <taxon>Aliarcobacter</taxon>
    </lineage>
</organism>
<protein>
    <recommendedName>
        <fullName evidence="1">Peptide chain release factor 1</fullName>
        <shortName evidence="1">RF-1</shortName>
    </recommendedName>
</protein>
<accession>A8EQZ4</accession>
<dbReference type="EMBL" id="CP000361">
    <property type="protein sequence ID" value="ABV66368.1"/>
    <property type="molecule type" value="Genomic_DNA"/>
</dbReference>
<dbReference type="RefSeq" id="WP_004510128.1">
    <property type="nucleotide sequence ID" value="NC_009850.1"/>
</dbReference>
<dbReference type="SMR" id="A8EQZ4"/>
<dbReference type="STRING" id="367737.Abu_0083"/>
<dbReference type="GeneID" id="24304024"/>
<dbReference type="KEGG" id="abu:Abu_0083"/>
<dbReference type="eggNOG" id="COG0216">
    <property type="taxonomic scope" value="Bacteria"/>
</dbReference>
<dbReference type="HOGENOM" id="CLU_036856_0_1_7"/>
<dbReference type="Proteomes" id="UP000001136">
    <property type="component" value="Chromosome"/>
</dbReference>
<dbReference type="GO" id="GO:0005737">
    <property type="term" value="C:cytoplasm"/>
    <property type="evidence" value="ECO:0007669"/>
    <property type="project" value="UniProtKB-SubCell"/>
</dbReference>
<dbReference type="GO" id="GO:0016149">
    <property type="term" value="F:translation release factor activity, codon specific"/>
    <property type="evidence" value="ECO:0007669"/>
    <property type="project" value="UniProtKB-UniRule"/>
</dbReference>
<dbReference type="FunFam" id="3.30.160.20:FF:000004">
    <property type="entry name" value="Peptide chain release factor 1"/>
    <property type="match status" value="1"/>
</dbReference>
<dbReference type="FunFam" id="3.30.70.1660:FF:000002">
    <property type="entry name" value="Peptide chain release factor 1"/>
    <property type="match status" value="1"/>
</dbReference>
<dbReference type="Gene3D" id="3.30.160.20">
    <property type="match status" value="1"/>
</dbReference>
<dbReference type="Gene3D" id="3.30.70.1660">
    <property type="match status" value="2"/>
</dbReference>
<dbReference type="Gene3D" id="6.10.140.1950">
    <property type="match status" value="1"/>
</dbReference>
<dbReference type="HAMAP" id="MF_00093">
    <property type="entry name" value="Rel_fac_1"/>
    <property type="match status" value="1"/>
</dbReference>
<dbReference type="InterPro" id="IPR005139">
    <property type="entry name" value="PCRF"/>
</dbReference>
<dbReference type="InterPro" id="IPR000352">
    <property type="entry name" value="Pep_chain_release_fac_I"/>
</dbReference>
<dbReference type="InterPro" id="IPR045853">
    <property type="entry name" value="Pep_chain_release_fac_I_sf"/>
</dbReference>
<dbReference type="InterPro" id="IPR050057">
    <property type="entry name" value="Prokaryotic/Mito_RF"/>
</dbReference>
<dbReference type="InterPro" id="IPR004373">
    <property type="entry name" value="RF-1"/>
</dbReference>
<dbReference type="NCBIfam" id="TIGR00019">
    <property type="entry name" value="prfA"/>
    <property type="match status" value="1"/>
</dbReference>
<dbReference type="NCBIfam" id="NF001859">
    <property type="entry name" value="PRK00591.1"/>
    <property type="match status" value="1"/>
</dbReference>
<dbReference type="PANTHER" id="PTHR43804">
    <property type="entry name" value="LD18447P"/>
    <property type="match status" value="1"/>
</dbReference>
<dbReference type="PANTHER" id="PTHR43804:SF7">
    <property type="entry name" value="LD18447P"/>
    <property type="match status" value="1"/>
</dbReference>
<dbReference type="Pfam" id="PF03462">
    <property type="entry name" value="PCRF"/>
    <property type="match status" value="1"/>
</dbReference>
<dbReference type="Pfam" id="PF00472">
    <property type="entry name" value="RF-1"/>
    <property type="match status" value="1"/>
</dbReference>
<dbReference type="SMART" id="SM00937">
    <property type="entry name" value="PCRF"/>
    <property type="match status" value="1"/>
</dbReference>
<dbReference type="SUPFAM" id="SSF75620">
    <property type="entry name" value="Release factor"/>
    <property type="match status" value="1"/>
</dbReference>
<dbReference type="PROSITE" id="PS00745">
    <property type="entry name" value="RF_PROK_I"/>
    <property type="match status" value="1"/>
</dbReference>
<reference key="1">
    <citation type="journal article" date="2007" name="PLoS ONE">
        <title>The complete genome sequence and analysis of the Epsilonproteobacterium Arcobacter butzleri.</title>
        <authorList>
            <person name="Miller W.G."/>
            <person name="Parker C.T."/>
            <person name="Rubenfield M."/>
            <person name="Mendz G.L."/>
            <person name="Woesten M.M.S.M."/>
            <person name="Ussery D.W."/>
            <person name="Stolz J.F."/>
            <person name="Binnewies T.T."/>
            <person name="Hallin P.F."/>
            <person name="Wang G."/>
            <person name="Malek J.A."/>
            <person name="Rogosin A."/>
            <person name="Stanker L.H."/>
            <person name="Mandrell R.E."/>
        </authorList>
    </citation>
    <scope>NUCLEOTIDE SEQUENCE [LARGE SCALE GENOMIC DNA]</scope>
    <source>
        <strain>RM4018</strain>
    </source>
</reference>
<proteinExistence type="inferred from homology"/>
<sequence>MLKDKLQPFINRFEEINQLLMSSEITSDIKRMTDLSKEQSSIQPIVSKAKEYIKVLEDIEENKLMLDDPELGDLAKEELKELETRKPELEEEIKVLMIPKDPNDDRNIYLELRAGTGGDEAAIFVGDLFRAYLRYAENNGWKVEIMSSSDSESGGYKEIVILVKGDHVYSKLKFEGGTHRVQRVPATESQGRVHTSAITVAVMPEVDDVEIEINENDLKIDVMRASGNGGQSVNTTDSAVRITHIPSGIVVTNQDQKSQHKNKDRALKVLKAKLYEIEMEKKMEAEGATRKEQVGTGDRSGRIRTYNYPQNRISDHRINLTLYRLDYIMNDGLFGEVIDPLIADHQSKLIEANGL</sequence>
<feature type="chain" id="PRO_1000057613" description="Peptide chain release factor 1">
    <location>
        <begin position="1"/>
        <end position="355"/>
    </location>
</feature>
<feature type="modified residue" description="N5-methylglutamine" evidence="1">
    <location>
        <position position="231"/>
    </location>
</feature>
<comment type="function">
    <text evidence="1">Peptide chain release factor 1 directs the termination of translation in response to the peptide chain termination codons UAG and UAA.</text>
</comment>
<comment type="subcellular location">
    <subcellularLocation>
        <location evidence="1">Cytoplasm</location>
    </subcellularLocation>
</comment>
<comment type="PTM">
    <text evidence="1">Methylated by PrmC. Methylation increases the termination efficiency of RF1.</text>
</comment>
<comment type="similarity">
    <text evidence="1">Belongs to the prokaryotic/mitochondrial release factor family.</text>
</comment>
<gene>
    <name evidence="1" type="primary">prfA</name>
    <name type="ordered locus">Abu_0083</name>
</gene>
<name>RF1_ALIB4</name>
<keyword id="KW-0963">Cytoplasm</keyword>
<keyword id="KW-0488">Methylation</keyword>
<keyword id="KW-0648">Protein biosynthesis</keyword>
<keyword id="KW-1185">Reference proteome</keyword>